<gene>
    <name type="primary">ythB</name>
    <name type="ordered locus">BSU30720</name>
</gene>
<comment type="function">
    <text evidence="2">May have a role in sporulation. Can compensate for the loss of cytochrome aa3.</text>
</comment>
<comment type="subcellular location">
    <subcellularLocation>
        <location evidence="3">Cell membrane</location>
        <topology evidence="3">Multi-pass membrane protein</topology>
    </subcellularLocation>
</comment>
<comment type="similarity">
    <text evidence="3">Belongs to the cytochrome ubiquinol oxidase subunit 2 family.</text>
</comment>
<reference key="1">
    <citation type="journal article" date="1997" name="Microbiology">
        <title>Sequencing and functional annotation of the Bacillus subtilis genes in the 200 kb rrnB-dnaB region.</title>
        <authorList>
            <person name="Lapidus A."/>
            <person name="Galleron N."/>
            <person name="Sorokin A."/>
            <person name="Ehrlich S.D."/>
        </authorList>
    </citation>
    <scope>NUCLEOTIDE SEQUENCE [GENOMIC DNA]</scope>
    <source>
        <strain>168</strain>
    </source>
</reference>
<reference key="2">
    <citation type="journal article" date="1997" name="Nature">
        <title>The complete genome sequence of the Gram-positive bacterium Bacillus subtilis.</title>
        <authorList>
            <person name="Kunst F."/>
            <person name="Ogasawara N."/>
            <person name="Moszer I."/>
            <person name="Albertini A.M."/>
            <person name="Alloni G."/>
            <person name="Azevedo V."/>
            <person name="Bertero M.G."/>
            <person name="Bessieres P."/>
            <person name="Bolotin A."/>
            <person name="Borchert S."/>
            <person name="Borriss R."/>
            <person name="Boursier L."/>
            <person name="Brans A."/>
            <person name="Braun M."/>
            <person name="Brignell S.C."/>
            <person name="Bron S."/>
            <person name="Brouillet S."/>
            <person name="Bruschi C.V."/>
            <person name="Caldwell B."/>
            <person name="Capuano V."/>
            <person name="Carter N.M."/>
            <person name="Choi S.-K."/>
            <person name="Codani J.-J."/>
            <person name="Connerton I.F."/>
            <person name="Cummings N.J."/>
            <person name="Daniel R.A."/>
            <person name="Denizot F."/>
            <person name="Devine K.M."/>
            <person name="Duesterhoeft A."/>
            <person name="Ehrlich S.D."/>
            <person name="Emmerson P.T."/>
            <person name="Entian K.-D."/>
            <person name="Errington J."/>
            <person name="Fabret C."/>
            <person name="Ferrari E."/>
            <person name="Foulger D."/>
            <person name="Fritz C."/>
            <person name="Fujita M."/>
            <person name="Fujita Y."/>
            <person name="Fuma S."/>
            <person name="Galizzi A."/>
            <person name="Galleron N."/>
            <person name="Ghim S.-Y."/>
            <person name="Glaser P."/>
            <person name="Goffeau A."/>
            <person name="Golightly E.J."/>
            <person name="Grandi G."/>
            <person name="Guiseppi G."/>
            <person name="Guy B.J."/>
            <person name="Haga K."/>
            <person name="Haiech J."/>
            <person name="Harwood C.R."/>
            <person name="Henaut A."/>
            <person name="Hilbert H."/>
            <person name="Holsappel S."/>
            <person name="Hosono S."/>
            <person name="Hullo M.-F."/>
            <person name="Itaya M."/>
            <person name="Jones L.-M."/>
            <person name="Joris B."/>
            <person name="Karamata D."/>
            <person name="Kasahara Y."/>
            <person name="Klaerr-Blanchard M."/>
            <person name="Klein C."/>
            <person name="Kobayashi Y."/>
            <person name="Koetter P."/>
            <person name="Koningstein G."/>
            <person name="Krogh S."/>
            <person name="Kumano M."/>
            <person name="Kurita K."/>
            <person name="Lapidus A."/>
            <person name="Lardinois S."/>
            <person name="Lauber J."/>
            <person name="Lazarevic V."/>
            <person name="Lee S.-M."/>
            <person name="Levine A."/>
            <person name="Liu H."/>
            <person name="Masuda S."/>
            <person name="Mauel C."/>
            <person name="Medigue C."/>
            <person name="Medina N."/>
            <person name="Mellado R.P."/>
            <person name="Mizuno M."/>
            <person name="Moestl D."/>
            <person name="Nakai S."/>
            <person name="Noback M."/>
            <person name="Noone D."/>
            <person name="O'Reilly M."/>
            <person name="Ogawa K."/>
            <person name="Ogiwara A."/>
            <person name="Oudega B."/>
            <person name="Park S.-H."/>
            <person name="Parro V."/>
            <person name="Pohl T.M."/>
            <person name="Portetelle D."/>
            <person name="Porwollik S."/>
            <person name="Prescott A.M."/>
            <person name="Presecan E."/>
            <person name="Pujic P."/>
            <person name="Purnelle B."/>
            <person name="Rapoport G."/>
            <person name="Rey M."/>
            <person name="Reynolds S."/>
            <person name="Rieger M."/>
            <person name="Rivolta C."/>
            <person name="Rocha E."/>
            <person name="Roche B."/>
            <person name="Rose M."/>
            <person name="Sadaie Y."/>
            <person name="Sato T."/>
            <person name="Scanlan E."/>
            <person name="Schleich S."/>
            <person name="Schroeter R."/>
            <person name="Scoffone F."/>
            <person name="Sekiguchi J."/>
            <person name="Sekowska A."/>
            <person name="Seror S.J."/>
            <person name="Serror P."/>
            <person name="Shin B.-S."/>
            <person name="Soldo B."/>
            <person name="Sorokin A."/>
            <person name="Tacconi E."/>
            <person name="Takagi T."/>
            <person name="Takahashi H."/>
            <person name="Takemaru K."/>
            <person name="Takeuchi M."/>
            <person name="Tamakoshi A."/>
            <person name="Tanaka T."/>
            <person name="Terpstra P."/>
            <person name="Tognoni A."/>
            <person name="Tosato V."/>
            <person name="Uchiyama S."/>
            <person name="Vandenbol M."/>
            <person name="Vannier F."/>
            <person name="Vassarotti A."/>
            <person name="Viari A."/>
            <person name="Wambutt R."/>
            <person name="Wedler E."/>
            <person name="Wedler H."/>
            <person name="Weitzenegger T."/>
            <person name="Winters P."/>
            <person name="Wipat A."/>
            <person name="Yamamoto H."/>
            <person name="Yamane K."/>
            <person name="Yasumoto K."/>
            <person name="Yata K."/>
            <person name="Yoshida K."/>
            <person name="Yoshikawa H.-F."/>
            <person name="Zumstein E."/>
            <person name="Yoshikawa H."/>
            <person name="Danchin A."/>
        </authorList>
    </citation>
    <scope>NUCLEOTIDE SEQUENCE [LARGE SCALE GENOMIC DNA]</scope>
    <source>
        <strain>168</strain>
    </source>
</reference>
<reference key="3">
    <citation type="journal article" date="2000" name="J. Bacteriol.">
        <title>Terminal oxidases of Bacillus subtilis strain 168: one quinol oxidase, cytochrome aa(3) or cytochrome bd, is required for aerobic growth.</title>
        <authorList>
            <person name="Winstedt L."/>
            <person name="von Wachenfeldt C."/>
        </authorList>
    </citation>
    <scope>FUNCTION IN SPORULATION</scope>
</reference>
<dbReference type="EMBL" id="AF008220">
    <property type="protein sequence ID" value="AAC00370.1"/>
    <property type="molecule type" value="Genomic_DNA"/>
</dbReference>
<dbReference type="EMBL" id="AL009126">
    <property type="protein sequence ID" value="CAB15050.1"/>
    <property type="molecule type" value="Genomic_DNA"/>
</dbReference>
<dbReference type="PIR" id="A69993">
    <property type="entry name" value="A69993"/>
</dbReference>
<dbReference type="RefSeq" id="NP_390950.1">
    <property type="nucleotide sequence ID" value="NC_000964.3"/>
</dbReference>
<dbReference type="RefSeq" id="WP_003229071.1">
    <property type="nucleotide sequence ID" value="NZ_OZ025638.1"/>
</dbReference>
<dbReference type="SMR" id="O34505"/>
<dbReference type="FunCoup" id="O34505">
    <property type="interactions" value="155"/>
</dbReference>
<dbReference type="STRING" id="224308.BSU30720"/>
<dbReference type="PaxDb" id="224308-BSU30720"/>
<dbReference type="EnsemblBacteria" id="CAB15050">
    <property type="protein sequence ID" value="CAB15050"/>
    <property type="gene ID" value="BSU_30720"/>
</dbReference>
<dbReference type="GeneID" id="937206"/>
<dbReference type="KEGG" id="bsu:BSU30720"/>
<dbReference type="PATRIC" id="fig|224308.179.peg.3330"/>
<dbReference type="eggNOG" id="COG1294">
    <property type="taxonomic scope" value="Bacteria"/>
</dbReference>
<dbReference type="InParanoid" id="O34505"/>
<dbReference type="OrthoDB" id="2416742at2"/>
<dbReference type="PhylomeDB" id="O34505"/>
<dbReference type="BioCyc" id="BSUB:BSU30720-MONOMER"/>
<dbReference type="Proteomes" id="UP000001570">
    <property type="component" value="Chromosome"/>
</dbReference>
<dbReference type="GO" id="GO:0005886">
    <property type="term" value="C:plasma membrane"/>
    <property type="evidence" value="ECO:0007669"/>
    <property type="project" value="UniProtKB-SubCell"/>
</dbReference>
<dbReference type="GO" id="GO:0030435">
    <property type="term" value="P:sporulation resulting in formation of a cellular spore"/>
    <property type="evidence" value="ECO:0007669"/>
    <property type="project" value="UniProtKB-KW"/>
</dbReference>
<dbReference type="InterPro" id="IPR003317">
    <property type="entry name" value="Cyt-d_oxidase_su2"/>
</dbReference>
<dbReference type="Pfam" id="PF02322">
    <property type="entry name" value="Cyt_bd_oxida_II"/>
    <property type="match status" value="1"/>
</dbReference>
<organism>
    <name type="scientific">Bacillus subtilis (strain 168)</name>
    <dbReference type="NCBI Taxonomy" id="224308"/>
    <lineage>
        <taxon>Bacteria</taxon>
        <taxon>Bacillati</taxon>
        <taxon>Bacillota</taxon>
        <taxon>Bacilli</taxon>
        <taxon>Bacillales</taxon>
        <taxon>Bacillaceae</taxon>
        <taxon>Bacillus</taxon>
    </lineage>
</organism>
<sequence length="346" mass="38845">MEISTDALIAISIIWGFVFIYAVMATMDFGAGFWSMIYLNKEHMKATDIANRFLSPTWEVTNVFIVAIVVALFSFFPGATFVLGTVLLIPGSMILLLLAIRSGFLVFSNTAKERKTLRYISGISGFIIPAILILVLPVTHGGFIEKTDGIYNLNMSKIFSSPNAYSFIGFAILSTLFLSSLLLADFSNVAEEQDAYRAYRKSALITGPISLLFAVCIMVTMRNEANWLYSGMMNDFSWIIASFITFVIAGIALFLPNKSFGQNIGKPRLALVAIGIQYFLASYAYGRAHLPYMIYPDVTVMSGFTEPATFRALFATYIVAFIILFPGFFFFWKMFMRDKRYIRQEE</sequence>
<feature type="chain" id="PRO_0000389098" description="Putative cytochrome bd menaquinol oxidase subunit II">
    <location>
        <begin position="1"/>
        <end position="346"/>
    </location>
</feature>
<feature type="transmembrane region" description="Helical" evidence="1">
    <location>
        <begin position="7"/>
        <end position="27"/>
    </location>
</feature>
<feature type="transmembrane region" description="Helical" evidence="1">
    <location>
        <begin position="63"/>
        <end position="83"/>
    </location>
</feature>
<feature type="transmembrane region" description="Helical" evidence="1">
    <location>
        <begin position="87"/>
        <end position="107"/>
    </location>
</feature>
<feature type="transmembrane region" description="Helical" evidence="1">
    <location>
        <begin position="119"/>
        <end position="139"/>
    </location>
</feature>
<feature type="transmembrane region" description="Helical" evidence="1">
    <location>
        <begin position="164"/>
        <end position="184"/>
    </location>
</feature>
<feature type="transmembrane region" description="Helical" evidence="1">
    <location>
        <begin position="201"/>
        <end position="221"/>
    </location>
</feature>
<feature type="transmembrane region" description="Helical" evidence="1">
    <location>
        <begin position="236"/>
        <end position="256"/>
    </location>
</feature>
<feature type="transmembrane region" description="Helical" evidence="1">
    <location>
        <begin position="269"/>
        <end position="289"/>
    </location>
</feature>
<feature type="transmembrane region" description="Helical" evidence="1">
    <location>
        <begin position="312"/>
        <end position="332"/>
    </location>
</feature>
<proteinExistence type="evidence at protein level"/>
<protein>
    <recommendedName>
        <fullName>Putative cytochrome bd menaquinol oxidase subunit II</fullName>
    </recommendedName>
</protein>
<evidence type="ECO:0000255" key="1"/>
<evidence type="ECO:0000269" key="2">
    <source>
    </source>
</evidence>
<evidence type="ECO:0000305" key="3"/>
<accession>O34505</accession>
<accession>Q795N6</accession>
<name>YTHB_BACSU</name>
<keyword id="KW-1003">Cell membrane</keyword>
<keyword id="KW-0472">Membrane</keyword>
<keyword id="KW-1185">Reference proteome</keyword>
<keyword id="KW-0749">Sporulation</keyword>
<keyword id="KW-0812">Transmembrane</keyword>
<keyword id="KW-1133">Transmembrane helix</keyword>